<organism>
    <name type="scientific">Meyerozyma guilliermondii (strain ATCC 6260 / CBS 566 / DSM 6381 / JCM 1539 / NBRC 10279 / NRRL Y-324)</name>
    <name type="common">Yeast</name>
    <name type="synonym">Candida guilliermondii</name>
    <dbReference type="NCBI Taxonomy" id="294746"/>
    <lineage>
        <taxon>Eukaryota</taxon>
        <taxon>Fungi</taxon>
        <taxon>Dikarya</taxon>
        <taxon>Ascomycota</taxon>
        <taxon>Saccharomycotina</taxon>
        <taxon>Pichiomycetes</taxon>
        <taxon>Debaryomycetaceae</taxon>
        <taxon>Meyerozyma</taxon>
    </lineage>
</organism>
<name>IML2_PICGU</name>
<feature type="chain" id="PRO_0000333354" description="Inclusion body clearance protein IML2">
    <location>
        <begin position="1"/>
        <end position="881"/>
    </location>
</feature>
<feature type="region of interest" description="Disordered" evidence="2">
    <location>
        <begin position="206"/>
        <end position="237"/>
    </location>
</feature>
<comment type="function">
    <text evidence="1">Inclusion body (IB) resident protein that interacts strongly with lipid droplet (LD) proteins. Involved in LD-mediated IB clearing after protein folding stress, probably by enabling access to the IBs of an LD-stored soluble sterol derivative that acts as a chaperone in inclusion clearing.</text>
</comment>
<comment type="subunit">
    <text evidence="1">Interacts with lipid droplet proteins.</text>
</comment>
<comment type="subcellular location">
    <subcellularLocation>
        <location evidence="1">Cytoplasm</location>
    </subcellularLocation>
    <subcellularLocation>
        <location evidence="1">Nucleus</location>
    </subcellularLocation>
    <text evidence="1">Localized exclusively in cytoplasmic inclusion bodies under protein folding stress conditions.</text>
</comment>
<comment type="similarity">
    <text evidence="3">Belongs to the IML2 family.</text>
</comment>
<dbReference type="EMBL" id="CH408157">
    <property type="protein sequence ID" value="EDK38453.2"/>
    <property type="molecule type" value="Genomic_DNA"/>
</dbReference>
<dbReference type="RefSeq" id="XP_001484822.1">
    <property type="nucleotide sequence ID" value="XM_001484772.1"/>
</dbReference>
<dbReference type="FunCoup" id="A5DH00">
    <property type="interactions" value="143"/>
</dbReference>
<dbReference type="GeneID" id="5127145"/>
<dbReference type="KEGG" id="pgu:PGUG_02551"/>
<dbReference type="VEuPathDB" id="FungiDB:PGUG_02551"/>
<dbReference type="eggNOG" id="KOG3783">
    <property type="taxonomic scope" value="Eukaryota"/>
</dbReference>
<dbReference type="HOGENOM" id="CLU_014926_0_0_1"/>
<dbReference type="InParanoid" id="A5DH00"/>
<dbReference type="OMA" id="WNGYNRM"/>
<dbReference type="OrthoDB" id="2154985at2759"/>
<dbReference type="Proteomes" id="UP000001997">
    <property type="component" value="Unassembled WGS sequence"/>
</dbReference>
<dbReference type="GO" id="GO:0005829">
    <property type="term" value="C:cytosol"/>
    <property type="evidence" value="ECO:0007669"/>
    <property type="project" value="TreeGrafter"/>
</dbReference>
<dbReference type="GO" id="GO:0005741">
    <property type="term" value="C:mitochondrial outer membrane"/>
    <property type="evidence" value="ECO:0007669"/>
    <property type="project" value="TreeGrafter"/>
</dbReference>
<dbReference type="GO" id="GO:0005634">
    <property type="term" value="C:nucleus"/>
    <property type="evidence" value="ECO:0007669"/>
    <property type="project" value="UniProtKB-SubCell"/>
</dbReference>
<dbReference type="InterPro" id="IPR019412">
    <property type="entry name" value="Iml2/TPR_39"/>
</dbReference>
<dbReference type="PANTHER" id="PTHR31859">
    <property type="entry name" value="TETRATRICOPEPTIDE REPEAT PROTEIN 39 FAMILY MEMBER"/>
    <property type="match status" value="1"/>
</dbReference>
<dbReference type="PANTHER" id="PTHR31859:SF1">
    <property type="entry name" value="TETRATRICOPEPTIDE REPEAT PROTEIN 39C"/>
    <property type="match status" value="1"/>
</dbReference>
<dbReference type="Pfam" id="PF10300">
    <property type="entry name" value="Iml2-TPR_39"/>
    <property type="match status" value="1"/>
</dbReference>
<gene>
    <name type="primary">IML2</name>
    <name type="ORF">PGUG_02551</name>
</gene>
<keyword id="KW-0963">Cytoplasm</keyword>
<keyword id="KW-0539">Nucleus</keyword>
<keyword id="KW-0597">Phosphoprotein</keyword>
<keyword id="KW-1185">Reference proteome</keyword>
<proteinExistence type="inferred from homology"/>
<protein>
    <recommendedName>
        <fullName>Inclusion body clearance protein IML2</fullName>
    </recommendedName>
</protein>
<evidence type="ECO:0000250" key="1">
    <source>
        <dbReference type="UniProtKB" id="P47031"/>
    </source>
</evidence>
<evidence type="ECO:0000256" key="2">
    <source>
        <dbReference type="SAM" id="MobiDB-lite"/>
    </source>
</evidence>
<evidence type="ECO:0000305" key="3"/>
<accession>A5DH00</accession>
<reference key="1">
    <citation type="journal article" date="2009" name="Nature">
        <title>Evolution of pathogenicity and sexual reproduction in eight Candida genomes.</title>
        <authorList>
            <person name="Butler G."/>
            <person name="Rasmussen M.D."/>
            <person name="Lin M.F."/>
            <person name="Santos M.A.S."/>
            <person name="Sakthikumar S."/>
            <person name="Munro C.A."/>
            <person name="Rheinbay E."/>
            <person name="Grabherr M."/>
            <person name="Forche A."/>
            <person name="Reedy J.L."/>
            <person name="Agrafioti I."/>
            <person name="Arnaud M.B."/>
            <person name="Bates S."/>
            <person name="Brown A.J.P."/>
            <person name="Brunke S."/>
            <person name="Costanzo M.C."/>
            <person name="Fitzpatrick D.A."/>
            <person name="de Groot P.W.J."/>
            <person name="Harris D."/>
            <person name="Hoyer L.L."/>
            <person name="Hube B."/>
            <person name="Klis F.M."/>
            <person name="Kodira C."/>
            <person name="Lennard N."/>
            <person name="Logue M.E."/>
            <person name="Martin R."/>
            <person name="Neiman A.M."/>
            <person name="Nikolaou E."/>
            <person name="Quail M.A."/>
            <person name="Quinn J."/>
            <person name="Santos M.C."/>
            <person name="Schmitzberger F.F."/>
            <person name="Sherlock G."/>
            <person name="Shah P."/>
            <person name="Silverstein K.A.T."/>
            <person name="Skrzypek M.S."/>
            <person name="Soll D."/>
            <person name="Staggs R."/>
            <person name="Stansfield I."/>
            <person name="Stumpf M.P.H."/>
            <person name="Sudbery P.E."/>
            <person name="Srikantha T."/>
            <person name="Zeng Q."/>
            <person name="Berman J."/>
            <person name="Berriman M."/>
            <person name="Heitman J."/>
            <person name="Gow N.A.R."/>
            <person name="Lorenz M.C."/>
            <person name="Birren B.W."/>
            <person name="Kellis M."/>
            <person name="Cuomo C.A."/>
        </authorList>
    </citation>
    <scope>NUCLEOTIDE SEQUENCE [LARGE SCALE GENOMIC DNA]</scope>
    <source>
        <strain>ATCC 6260 / CBS 566 / DSM 6381 / JCM 1539 / NBRC 10279 / NRRL Y-324</strain>
    </source>
</reference>
<sequence length="881" mass="98856">MFKGLRKKASALSLTPTSSSASLGGSNHPQYSKILKQVRDFEIALRAMDFLLDDRAEEGMKLLETESKKHSEMHSDQPAGIFPLAMGVMDFIEATLGFEPEVMARAHETLSNAEAASLTNSKYNTKHQLNTSMIYPPGTEFQVTLAESTLLNALVMLLTENNSFLEAAKALLKLRKAYQTLDSLYKRIKESEPVFNRNLAKLKRGTSSKNVSTVDLPGFESTDNLGSSNASSSSLPEDVKLMNSLEQIFQMRKSRVEGTNLGRDVNPDRVNLFKDASSDHIPRMSSLRDLQANPSPRAVSPNVALQNSVFSNKPIGTDYDSDEDDDEFTDALETLQEDIPISAPMPIYMKSNGGNRIASGTESIISFSTDYSASTSSDLNSNHLHVSTIDEFIHSGVQLCFGILQVVLSLIPPTIGKVLSIVGFKGDFEAGMKMLWRTAITSRNIHGELALLCLLVFYDGPIEFIDNGYQVPNKDSKIAREVFAIDNRSTVSDEELKAITENPSSYTPQLLERARTHFKHNALWILQQGRMLAAQGQLDEAISLMQGFTDDPDNKINMRQIEGLFLFDRSMLYAFRHSFDECARDFVKLVDKNSWSQGLYLFFAGCSYLEKYRMIKLGLLQVENEQETLKELAEKAEHFMKLGPTYVPGHGVNAANKKGGIGGNKKQLPFDKYLLRKMAHLEEVQKQNPKLAFIDCVGTSPYHEIIYFWNGYNRMPTKDLELSIKLLGYSGAPDSEFSANTSSNNYSYIKETMDEAMLRYFFQAMALRSLGRHSEGLALLDSHVISKYVTQDSPLANFKFTKMTYSPFLYPTALYEKSRFVWNLRTSAPDFDVRKSITDCETLLKKAEIVSDIGDYEMSSRTSMNIKASLDRVTKLRNQYL</sequence>